<protein>
    <recommendedName>
        <fullName evidence="1">6,7-dimethyl-8-ribityllumazine synthase</fullName>
        <shortName evidence="1">DMRL synthase</shortName>
        <shortName evidence="1">LS</shortName>
        <shortName evidence="1">Lumazine synthase</shortName>
        <ecNumber evidence="1">2.5.1.78</ecNumber>
    </recommendedName>
</protein>
<accession>A3NY88</accession>
<dbReference type="EC" id="2.5.1.78" evidence="1"/>
<dbReference type="EMBL" id="CP000572">
    <property type="protein sequence ID" value="ABN91496.1"/>
    <property type="molecule type" value="Genomic_DNA"/>
</dbReference>
<dbReference type="RefSeq" id="WP_004186056.1">
    <property type="nucleotide sequence ID" value="NC_009076.1"/>
</dbReference>
<dbReference type="SMR" id="A3NY88"/>
<dbReference type="GeneID" id="93061204"/>
<dbReference type="KEGG" id="bpl:BURPS1106A_3070"/>
<dbReference type="HOGENOM" id="CLU_089358_1_2_4"/>
<dbReference type="UniPathway" id="UPA00275">
    <property type="reaction ID" value="UER00404"/>
</dbReference>
<dbReference type="Proteomes" id="UP000006738">
    <property type="component" value="Chromosome I"/>
</dbReference>
<dbReference type="GO" id="GO:0005829">
    <property type="term" value="C:cytosol"/>
    <property type="evidence" value="ECO:0007669"/>
    <property type="project" value="TreeGrafter"/>
</dbReference>
<dbReference type="GO" id="GO:0009349">
    <property type="term" value="C:riboflavin synthase complex"/>
    <property type="evidence" value="ECO:0007669"/>
    <property type="project" value="InterPro"/>
</dbReference>
<dbReference type="GO" id="GO:0000906">
    <property type="term" value="F:6,7-dimethyl-8-ribityllumazine synthase activity"/>
    <property type="evidence" value="ECO:0007669"/>
    <property type="project" value="UniProtKB-UniRule"/>
</dbReference>
<dbReference type="GO" id="GO:0009231">
    <property type="term" value="P:riboflavin biosynthetic process"/>
    <property type="evidence" value="ECO:0007669"/>
    <property type="project" value="UniProtKB-UniRule"/>
</dbReference>
<dbReference type="CDD" id="cd09209">
    <property type="entry name" value="Lumazine_synthase-I"/>
    <property type="match status" value="1"/>
</dbReference>
<dbReference type="Gene3D" id="3.40.50.960">
    <property type="entry name" value="Lumazine/riboflavin synthase"/>
    <property type="match status" value="1"/>
</dbReference>
<dbReference type="HAMAP" id="MF_00178">
    <property type="entry name" value="Lumazine_synth"/>
    <property type="match status" value="1"/>
</dbReference>
<dbReference type="InterPro" id="IPR034964">
    <property type="entry name" value="LS"/>
</dbReference>
<dbReference type="InterPro" id="IPR002180">
    <property type="entry name" value="LS/RS"/>
</dbReference>
<dbReference type="InterPro" id="IPR036467">
    <property type="entry name" value="LS/RS_sf"/>
</dbReference>
<dbReference type="NCBIfam" id="TIGR00114">
    <property type="entry name" value="lumazine-synth"/>
    <property type="match status" value="1"/>
</dbReference>
<dbReference type="PANTHER" id="PTHR21058:SF0">
    <property type="entry name" value="6,7-DIMETHYL-8-RIBITYLLUMAZINE SYNTHASE"/>
    <property type="match status" value="1"/>
</dbReference>
<dbReference type="PANTHER" id="PTHR21058">
    <property type="entry name" value="6,7-DIMETHYL-8-RIBITYLLUMAZINE SYNTHASE DMRL SYNTHASE LUMAZINE SYNTHASE"/>
    <property type="match status" value="1"/>
</dbReference>
<dbReference type="Pfam" id="PF00885">
    <property type="entry name" value="DMRL_synthase"/>
    <property type="match status" value="1"/>
</dbReference>
<dbReference type="SUPFAM" id="SSF52121">
    <property type="entry name" value="Lumazine synthase"/>
    <property type="match status" value="1"/>
</dbReference>
<evidence type="ECO:0000255" key="1">
    <source>
        <dbReference type="HAMAP-Rule" id="MF_00178"/>
    </source>
</evidence>
<evidence type="ECO:0000256" key="2">
    <source>
        <dbReference type="SAM" id="MobiDB-lite"/>
    </source>
</evidence>
<feature type="chain" id="PRO_1000040383" description="6,7-dimethyl-8-ribityllumazine synthase">
    <location>
        <begin position="1"/>
        <end position="173"/>
    </location>
</feature>
<feature type="region of interest" description="Disordered" evidence="2">
    <location>
        <begin position="150"/>
        <end position="173"/>
    </location>
</feature>
<feature type="compositionally biased region" description="Acidic residues" evidence="2">
    <location>
        <begin position="154"/>
        <end position="173"/>
    </location>
</feature>
<feature type="active site" description="Proton donor" evidence="1">
    <location>
        <position position="90"/>
    </location>
</feature>
<feature type="binding site" evidence="1">
    <location>
        <position position="24"/>
    </location>
    <ligand>
        <name>5-amino-6-(D-ribitylamino)uracil</name>
        <dbReference type="ChEBI" id="CHEBI:15934"/>
    </ligand>
</feature>
<feature type="binding site" evidence="1">
    <location>
        <begin position="58"/>
        <end position="60"/>
    </location>
    <ligand>
        <name>5-amino-6-(D-ribitylamino)uracil</name>
        <dbReference type="ChEBI" id="CHEBI:15934"/>
    </ligand>
</feature>
<feature type="binding site" evidence="1">
    <location>
        <begin position="82"/>
        <end position="84"/>
    </location>
    <ligand>
        <name>5-amino-6-(D-ribitylamino)uracil</name>
        <dbReference type="ChEBI" id="CHEBI:15934"/>
    </ligand>
</feature>
<feature type="binding site" evidence="1">
    <location>
        <begin position="87"/>
        <end position="88"/>
    </location>
    <ligand>
        <name>(2S)-2-hydroxy-3-oxobutyl phosphate</name>
        <dbReference type="ChEBI" id="CHEBI:58830"/>
    </ligand>
</feature>
<feature type="binding site" evidence="1">
    <location>
        <position position="115"/>
    </location>
    <ligand>
        <name>5-amino-6-(D-ribitylamino)uracil</name>
        <dbReference type="ChEBI" id="CHEBI:15934"/>
    </ligand>
</feature>
<feature type="binding site" evidence="1">
    <location>
        <position position="129"/>
    </location>
    <ligand>
        <name>(2S)-2-hydroxy-3-oxobutyl phosphate</name>
        <dbReference type="ChEBI" id="CHEBI:58830"/>
    </ligand>
</feature>
<name>RISB_BURP0</name>
<reference key="1">
    <citation type="journal article" date="2010" name="Genome Biol. Evol.">
        <title>Continuing evolution of Burkholderia mallei through genome reduction and large-scale rearrangements.</title>
        <authorList>
            <person name="Losada L."/>
            <person name="Ronning C.M."/>
            <person name="DeShazer D."/>
            <person name="Woods D."/>
            <person name="Fedorova N."/>
            <person name="Kim H.S."/>
            <person name="Shabalina S.A."/>
            <person name="Pearson T.R."/>
            <person name="Brinkac L."/>
            <person name="Tan P."/>
            <person name="Nandi T."/>
            <person name="Crabtree J."/>
            <person name="Badger J."/>
            <person name="Beckstrom-Sternberg S."/>
            <person name="Saqib M."/>
            <person name="Schutzer S.E."/>
            <person name="Keim P."/>
            <person name="Nierman W.C."/>
        </authorList>
    </citation>
    <scope>NUCLEOTIDE SEQUENCE [LARGE SCALE GENOMIC DNA]</scope>
    <source>
        <strain>1106a</strain>
    </source>
</reference>
<sequence length="173" mass="18810">MEIGQYQPNLEGDGLRIGIVQSRFNEPVCNGLADACVEELERLGVSGEDVLLVTVPGALEIPLALQKLAESNQFDALIALGAVIRGETYHFELVSNESGAGITRIALDFNTPIANAVLTTETDEQAIARMTEKGRDAARVAVEMANLTMTLDQLSDDEEDEEDEDDEDEEERA</sequence>
<comment type="function">
    <text evidence="1">Catalyzes the formation of 6,7-dimethyl-8-ribityllumazine by condensation of 5-amino-6-(D-ribitylamino)uracil with 3,4-dihydroxy-2-butanone 4-phosphate. This is the penultimate step in the biosynthesis of riboflavin.</text>
</comment>
<comment type="catalytic activity">
    <reaction evidence="1">
        <text>(2S)-2-hydroxy-3-oxobutyl phosphate + 5-amino-6-(D-ribitylamino)uracil = 6,7-dimethyl-8-(1-D-ribityl)lumazine + phosphate + 2 H2O + H(+)</text>
        <dbReference type="Rhea" id="RHEA:26152"/>
        <dbReference type="ChEBI" id="CHEBI:15377"/>
        <dbReference type="ChEBI" id="CHEBI:15378"/>
        <dbReference type="ChEBI" id="CHEBI:15934"/>
        <dbReference type="ChEBI" id="CHEBI:43474"/>
        <dbReference type="ChEBI" id="CHEBI:58201"/>
        <dbReference type="ChEBI" id="CHEBI:58830"/>
        <dbReference type="EC" id="2.5.1.78"/>
    </reaction>
</comment>
<comment type="pathway">
    <text evidence="1">Cofactor biosynthesis; riboflavin biosynthesis; riboflavin from 2-hydroxy-3-oxobutyl phosphate and 5-amino-6-(D-ribitylamino)uracil: step 1/2.</text>
</comment>
<comment type="similarity">
    <text evidence="1">Belongs to the DMRL synthase family.</text>
</comment>
<organism>
    <name type="scientific">Burkholderia pseudomallei (strain 1106a)</name>
    <dbReference type="NCBI Taxonomy" id="357348"/>
    <lineage>
        <taxon>Bacteria</taxon>
        <taxon>Pseudomonadati</taxon>
        <taxon>Pseudomonadota</taxon>
        <taxon>Betaproteobacteria</taxon>
        <taxon>Burkholderiales</taxon>
        <taxon>Burkholderiaceae</taxon>
        <taxon>Burkholderia</taxon>
        <taxon>pseudomallei group</taxon>
    </lineage>
</organism>
<keyword id="KW-0686">Riboflavin biosynthesis</keyword>
<keyword id="KW-0808">Transferase</keyword>
<gene>
    <name evidence="1" type="primary">ribH</name>
    <name type="ordered locus">BURPS1106A_3070</name>
</gene>
<proteinExistence type="inferred from homology"/>